<sequence>MDLSGVKKKSLLGVKENNKKSSTRAPSPTKRKDRSDEKSKDRSKDKGATKESSEKDRGRDKTRKRRSASSGSSSTRSRSSSTSSSGSSTSTGSSSGSSSSSASSRSGSSSTSRSSSSSSSSGSPSPSRRRHDNRRRSRSKSKPPKRDEKERKRRSPSPKPTKVHIGRLTRNVTKDHIMEIFSTYGKIKMIDMPVERMHPHLSKGYAYVEFENPDEAEKALKHMDGGQIDGQEITATAVLAPWPRPPPRRFSPPRRMLPPLPMWRRSPPRMRRRSRSPRRRSPARRRSRSPGRRRHRSRSSSNSSR</sequence>
<comment type="function">
    <text evidence="1">Part of pre- and post-splicing multiprotein mRNP complexes. Auxiliary component of the splicing-dependent multiprotein exon junction complex (EJC) deposited at splice junction on mRNAs. The EJC is a dynamic structure consisting of core proteins and several peripheral nuclear and cytoplasmic associated factors that join the complex only transiently either during EJC assembly or during subsequent mRNA metabolism. Component of the ASAP and PSAP complexes which bind RNA in a sequence-independent manner and are proposed to be recruited to the EJC prior to or during the splicing process and to regulate specific excision of introns in specific transcription subsets. The ASAP complex can inhibit RNA processing during in vitro splicing reactions. The ASAP complex promotes apoptosis and is disassembled after induction of apoptosis. Enhances the formation of the ATP-dependent A complex of the spliceosome. Involved in both constitutive splicing and, in association with SRP54 and TRA2B/SFRS10, in distinctive modulation of alternative splicing in a substrate-dependent manner. Involved in the splicing modulation of BCL2L1/Bcl-X (and probably other apoptotic genes); specifically inhibits formation of proapoptotic isoforms such as Bcl-X(S); the activity is different from the established EJC assembly and function. Participates in mRNA 3'-end cleavage. Involved in UPF2-dependent nonsense-mediated decay (NMD) of mRNAs containing premature stop codons. Also mediates increase of mRNA abundance and translational efficiency. Binds spliced mRNA 20-25 nt upstream of exon-exon junctions (By similarity).</text>
</comment>
<comment type="subunit">
    <text evidence="1">Found in mRNA splicing-dependent exon junction complexes (EJC). Found in a post-splicing complex with NXF1, RBM8A, UPF1, UPF2, UPF3A, UPF3B and RNPS1. Component of the heterotrimeric ASAP (apoptosis- and splicing-associated protein) and PSAP complexes consisting of RNPS1, SAP18 and either ACIN1 or PNN, respectively; the ASAP and PSAP complexes probably are formed mutually exclusive. Component of the active spliceosome. Associates with polysomes. Interacts with the cleaved p110 isoform of CDC2L1, CSNK2A1, PNN, SART3, SRP54, SRRM1 and TRA2B/SFRS10 (By similarity).</text>
</comment>
<comment type="subcellular location">
    <subcellularLocation>
        <location evidence="1">Nucleus</location>
    </subcellularLocation>
    <subcellularLocation>
        <location evidence="1">Nucleus speckle</location>
    </subcellularLocation>
    <subcellularLocation>
        <location evidence="1">Cytoplasm</location>
    </subcellularLocation>
    <text evidence="1">Nucleocytoplasmic shuttling protein. Colocalizes with the core EJC, ALYREF/THOC4, NXF1 and UAP56 in the nucleus and nuclear speckles (By similarity).</text>
</comment>
<comment type="domain">
    <text evidence="1">The RRM domain is required for the formation of the ASAP complex.</text>
</comment>
<comment type="PTM">
    <text evidence="1">Phosphorylated on one or more of the four Ser/Thr residues (Ser-43, Thr-49, Ser-52 or Ser-53). Ser-53 phosphorylation site is important for splicing and translation stimulation activity in vitro (By similarity).</text>
</comment>
<comment type="similarity">
    <text evidence="5">Belongs to the splicing factor SR family.</text>
</comment>
<dbReference type="EMBL" id="BC150075">
    <property type="protein sequence ID" value="AAI50076.1"/>
    <property type="molecule type" value="mRNA"/>
</dbReference>
<dbReference type="RefSeq" id="NP_001095311.1">
    <property type="nucleotide sequence ID" value="NM_001101841.1"/>
</dbReference>
<dbReference type="RefSeq" id="XP_005224445.1">
    <property type="nucleotide sequence ID" value="XM_005224388.5"/>
</dbReference>
<dbReference type="RefSeq" id="XP_005224446.1">
    <property type="nucleotide sequence ID" value="XM_005224389.3"/>
</dbReference>
<dbReference type="RefSeq" id="XP_005224447.1">
    <property type="nucleotide sequence ID" value="XM_005224390.5"/>
</dbReference>
<dbReference type="SMR" id="A6QR16"/>
<dbReference type="FunCoup" id="A6QR16">
    <property type="interactions" value="3730"/>
</dbReference>
<dbReference type="STRING" id="9913.ENSBTAP00000061322"/>
<dbReference type="PaxDb" id="9913-ENSBTAP00000013151"/>
<dbReference type="Ensembl" id="ENSBTAT00000013151.6">
    <property type="protein sequence ID" value="ENSBTAP00000013151.4"/>
    <property type="gene ID" value="ENSBTAG00000009969.6"/>
</dbReference>
<dbReference type="GeneID" id="504506"/>
<dbReference type="KEGG" id="bta:504506"/>
<dbReference type="CTD" id="10921"/>
<dbReference type="VEuPathDB" id="HostDB:ENSBTAG00000009969"/>
<dbReference type="eggNOG" id="KOG4209">
    <property type="taxonomic scope" value="Eukaryota"/>
</dbReference>
<dbReference type="GeneTree" id="ENSGT00730000111029"/>
<dbReference type="HOGENOM" id="CLU_076438_0_0_1"/>
<dbReference type="InParanoid" id="A6QR16"/>
<dbReference type="OMA" id="EFPVDRY"/>
<dbReference type="OrthoDB" id="252020at2759"/>
<dbReference type="TreeFam" id="TF314165"/>
<dbReference type="Reactome" id="R-BTA-159236">
    <property type="pathway name" value="Transport of Mature mRNA derived from an Intron-Containing Transcript"/>
</dbReference>
<dbReference type="Reactome" id="R-BTA-72163">
    <property type="pathway name" value="mRNA Splicing - Major Pathway"/>
</dbReference>
<dbReference type="Reactome" id="R-BTA-72187">
    <property type="pathway name" value="mRNA 3'-end processing"/>
</dbReference>
<dbReference type="Reactome" id="R-BTA-73856">
    <property type="pathway name" value="RNA Polymerase II Transcription Termination"/>
</dbReference>
<dbReference type="Reactome" id="R-BTA-975957">
    <property type="pathway name" value="Nonsense Mediated Decay (NMD) enhanced by the Exon Junction Complex (EJC)"/>
</dbReference>
<dbReference type="Proteomes" id="UP000009136">
    <property type="component" value="Chromosome 25"/>
</dbReference>
<dbReference type="Bgee" id="ENSBTAG00000009969">
    <property type="expression patterns" value="Expressed in retina and 106 other cell types or tissues"/>
</dbReference>
<dbReference type="GO" id="GO:0061574">
    <property type="term" value="C:ASAP complex"/>
    <property type="evidence" value="ECO:0000250"/>
    <property type="project" value="UniProtKB"/>
</dbReference>
<dbReference type="GO" id="GO:0005737">
    <property type="term" value="C:cytoplasm"/>
    <property type="evidence" value="ECO:0000318"/>
    <property type="project" value="GO_Central"/>
</dbReference>
<dbReference type="GO" id="GO:0016607">
    <property type="term" value="C:nuclear speck"/>
    <property type="evidence" value="ECO:0007669"/>
    <property type="project" value="UniProtKB-SubCell"/>
</dbReference>
<dbReference type="GO" id="GO:0005654">
    <property type="term" value="C:nucleoplasm"/>
    <property type="evidence" value="ECO:0000318"/>
    <property type="project" value="GO_Central"/>
</dbReference>
<dbReference type="GO" id="GO:0003723">
    <property type="term" value="F:RNA binding"/>
    <property type="evidence" value="ECO:0007669"/>
    <property type="project" value="UniProtKB-KW"/>
</dbReference>
<dbReference type="GO" id="GO:0000398">
    <property type="term" value="P:mRNA splicing, via spliceosome"/>
    <property type="evidence" value="ECO:0000318"/>
    <property type="project" value="GO_Central"/>
</dbReference>
<dbReference type="GO" id="GO:0048025">
    <property type="term" value="P:negative regulation of mRNA splicing, via spliceosome"/>
    <property type="evidence" value="ECO:0000250"/>
    <property type="project" value="UniProtKB"/>
</dbReference>
<dbReference type="GO" id="GO:0000184">
    <property type="term" value="P:nuclear-transcribed mRNA catabolic process, nonsense-mediated decay"/>
    <property type="evidence" value="ECO:0007669"/>
    <property type="project" value="UniProtKB-KW"/>
</dbReference>
<dbReference type="GO" id="GO:0043065">
    <property type="term" value="P:positive regulation of apoptotic process"/>
    <property type="evidence" value="ECO:0000250"/>
    <property type="project" value="UniProtKB"/>
</dbReference>
<dbReference type="GO" id="GO:0000381">
    <property type="term" value="P:regulation of alternative mRNA splicing, via spliceosome"/>
    <property type="evidence" value="ECO:0000250"/>
    <property type="project" value="UniProtKB"/>
</dbReference>
<dbReference type="CDD" id="cd12365">
    <property type="entry name" value="RRM_RNPS1"/>
    <property type="match status" value="1"/>
</dbReference>
<dbReference type="FunFam" id="3.30.70.330:FF:000210">
    <property type="entry name" value="RNA-binding protein with serine-rich domain 1"/>
    <property type="match status" value="1"/>
</dbReference>
<dbReference type="Gene3D" id="3.30.70.330">
    <property type="match status" value="1"/>
</dbReference>
<dbReference type="InterPro" id="IPR012677">
    <property type="entry name" value="Nucleotide-bd_a/b_plait_sf"/>
</dbReference>
<dbReference type="InterPro" id="IPR035979">
    <property type="entry name" value="RBD_domain_sf"/>
</dbReference>
<dbReference type="InterPro" id="IPR034201">
    <property type="entry name" value="RNPS1_RRM"/>
</dbReference>
<dbReference type="InterPro" id="IPR000504">
    <property type="entry name" value="RRM_dom"/>
</dbReference>
<dbReference type="PANTHER" id="PTHR15481">
    <property type="entry name" value="RIBONUCLEIC ACID BINDING PROTEIN S1"/>
    <property type="match status" value="1"/>
</dbReference>
<dbReference type="PANTHER" id="PTHR15481:SF2">
    <property type="entry name" value="RNA-BINDING PROTEIN WITH SERINE-RICH DOMAIN 1"/>
    <property type="match status" value="1"/>
</dbReference>
<dbReference type="Pfam" id="PF00076">
    <property type="entry name" value="RRM_1"/>
    <property type="match status" value="1"/>
</dbReference>
<dbReference type="SMART" id="SM00360">
    <property type="entry name" value="RRM"/>
    <property type="match status" value="1"/>
</dbReference>
<dbReference type="SUPFAM" id="SSF54928">
    <property type="entry name" value="RNA-binding domain, RBD"/>
    <property type="match status" value="1"/>
</dbReference>
<dbReference type="PROSITE" id="PS50102">
    <property type="entry name" value="RRM"/>
    <property type="match status" value="1"/>
</dbReference>
<gene>
    <name type="primary">RNPS1</name>
</gene>
<protein>
    <recommendedName>
        <fullName>RNA-binding protein with serine-rich domain 1</fullName>
    </recommendedName>
</protein>
<evidence type="ECO:0000250" key="1"/>
<evidence type="ECO:0000250" key="2">
    <source>
        <dbReference type="UniProtKB" id="Q15287"/>
    </source>
</evidence>
<evidence type="ECO:0000255" key="3">
    <source>
        <dbReference type="PROSITE-ProRule" id="PRU00176"/>
    </source>
</evidence>
<evidence type="ECO:0000256" key="4">
    <source>
        <dbReference type="SAM" id="MobiDB-lite"/>
    </source>
</evidence>
<evidence type="ECO:0000305" key="5"/>
<name>RNPS1_BOVIN</name>
<proteinExistence type="evidence at transcript level"/>
<feature type="chain" id="PRO_0000372693" description="RNA-binding protein with serine-rich domain 1">
    <location>
        <begin position="1"/>
        <end position="305"/>
    </location>
</feature>
<feature type="domain" description="RRM" evidence="3">
    <location>
        <begin position="161"/>
        <end position="240"/>
    </location>
</feature>
<feature type="region of interest" description="Necessary for interaction with the cleaved p110 isoform of CDC2L1" evidence="1">
    <location>
        <begin position="1"/>
        <end position="220"/>
    </location>
</feature>
<feature type="region of interest" description="Disordered" evidence="4">
    <location>
        <begin position="1"/>
        <end position="170"/>
    </location>
</feature>
<feature type="region of interest" description="Necessary for interaction with SRP54, nuclear localization and exon-skipping" evidence="1">
    <location>
        <begin position="1"/>
        <end position="161"/>
    </location>
</feature>
<feature type="region of interest" description="Necessary for interactions with UPF2 and UPF3B and UPF2-dependent NMD" evidence="1">
    <location>
        <begin position="69"/>
        <end position="121"/>
    </location>
</feature>
<feature type="region of interest" description="Necessary for interaction with PNN and exon-skipping" evidence="1">
    <location>
        <begin position="156"/>
        <end position="242"/>
    </location>
</feature>
<feature type="region of interest" description="Interaction with SAP18 and ACIN1" evidence="1">
    <location>
        <begin position="159"/>
        <end position="244"/>
    </location>
</feature>
<feature type="region of interest" description="Necessary for interaction with TRA2B, nuclear localization and exon-skipping" evidence="1">
    <location>
        <begin position="238"/>
        <end position="305"/>
    </location>
</feature>
<feature type="region of interest" description="Disordered" evidence="4">
    <location>
        <begin position="240"/>
        <end position="305"/>
    </location>
</feature>
<feature type="compositionally biased region" description="Basic residues" evidence="4">
    <location>
        <begin position="1"/>
        <end position="10"/>
    </location>
</feature>
<feature type="compositionally biased region" description="Basic and acidic residues" evidence="4">
    <location>
        <begin position="33"/>
        <end position="59"/>
    </location>
</feature>
<feature type="compositionally biased region" description="Low complexity" evidence="4">
    <location>
        <begin position="68"/>
        <end position="126"/>
    </location>
</feature>
<feature type="compositionally biased region" description="Basic residues" evidence="4">
    <location>
        <begin position="127"/>
        <end position="143"/>
    </location>
</feature>
<feature type="compositionally biased region" description="Basic residues" evidence="4">
    <location>
        <begin position="151"/>
        <end position="167"/>
    </location>
</feature>
<feature type="compositionally biased region" description="Pro residues" evidence="4">
    <location>
        <begin position="242"/>
        <end position="261"/>
    </location>
</feature>
<feature type="compositionally biased region" description="Basic residues" evidence="4">
    <location>
        <begin position="266"/>
        <end position="298"/>
    </location>
</feature>
<feature type="modified residue" description="Phosphoserine" evidence="2">
    <location>
        <position position="53"/>
    </location>
</feature>
<feature type="modified residue" description="Phosphoserine" evidence="2">
    <location>
        <position position="155"/>
    </location>
</feature>
<feature type="modified residue" description="Phosphoserine" evidence="2">
    <location>
        <position position="157"/>
    </location>
</feature>
<feature type="modified residue" description="Phosphothreonine" evidence="2">
    <location>
        <position position="161"/>
    </location>
</feature>
<feature type="modified residue" description="N6-acetyllysine" evidence="2">
    <location>
        <position position="218"/>
    </location>
</feature>
<feature type="cross-link" description="Glycyl lysine isopeptide (Lys-Gly) (interchain with G-Cter in SUMO2)" evidence="2">
    <location>
        <position position="7"/>
    </location>
</feature>
<feature type="cross-link" description="Glycyl lysine isopeptide (Lys-Gly) (interchain with G-Cter in SUMO2)" evidence="2">
    <location>
        <position position="15"/>
    </location>
</feature>
<accession>A6QR16</accession>
<reference key="1">
    <citation type="submission" date="2007-07" db="EMBL/GenBank/DDBJ databases">
        <authorList>
            <consortium name="NIH - Mammalian Gene Collection (MGC) project"/>
        </authorList>
    </citation>
    <scope>NUCLEOTIDE SEQUENCE [LARGE SCALE MRNA]</scope>
    <source>
        <strain>Hereford</strain>
        <tissue>Uterus</tissue>
    </source>
</reference>
<organism>
    <name type="scientific">Bos taurus</name>
    <name type="common">Bovine</name>
    <dbReference type="NCBI Taxonomy" id="9913"/>
    <lineage>
        <taxon>Eukaryota</taxon>
        <taxon>Metazoa</taxon>
        <taxon>Chordata</taxon>
        <taxon>Craniata</taxon>
        <taxon>Vertebrata</taxon>
        <taxon>Euteleostomi</taxon>
        <taxon>Mammalia</taxon>
        <taxon>Eutheria</taxon>
        <taxon>Laurasiatheria</taxon>
        <taxon>Artiodactyla</taxon>
        <taxon>Ruminantia</taxon>
        <taxon>Pecora</taxon>
        <taxon>Bovidae</taxon>
        <taxon>Bovinae</taxon>
        <taxon>Bos</taxon>
    </lineage>
</organism>
<keyword id="KW-0007">Acetylation</keyword>
<keyword id="KW-0963">Cytoplasm</keyword>
<keyword id="KW-1017">Isopeptide bond</keyword>
<keyword id="KW-0507">mRNA processing</keyword>
<keyword id="KW-0508">mRNA splicing</keyword>
<keyword id="KW-0866">Nonsense-mediated mRNA decay</keyword>
<keyword id="KW-0539">Nucleus</keyword>
<keyword id="KW-0597">Phosphoprotein</keyword>
<keyword id="KW-1185">Reference proteome</keyword>
<keyword id="KW-0694">RNA-binding</keyword>
<keyword id="KW-0832">Ubl conjugation</keyword>